<accession>B8HAC4</accession>
<comment type="function">
    <text evidence="2">Cell wall formation.</text>
</comment>
<comment type="catalytic activity">
    <reaction evidence="2">
        <text>2 D-alanine + ATP = D-alanyl-D-alanine + ADP + phosphate + H(+)</text>
        <dbReference type="Rhea" id="RHEA:11224"/>
        <dbReference type="ChEBI" id="CHEBI:15378"/>
        <dbReference type="ChEBI" id="CHEBI:30616"/>
        <dbReference type="ChEBI" id="CHEBI:43474"/>
        <dbReference type="ChEBI" id="CHEBI:57416"/>
        <dbReference type="ChEBI" id="CHEBI:57822"/>
        <dbReference type="ChEBI" id="CHEBI:456216"/>
        <dbReference type="EC" id="6.3.2.4"/>
    </reaction>
</comment>
<comment type="cofactor">
    <cofactor evidence="1">
        <name>Mg(2+)</name>
        <dbReference type="ChEBI" id="CHEBI:18420"/>
    </cofactor>
    <cofactor evidence="1">
        <name>Mn(2+)</name>
        <dbReference type="ChEBI" id="CHEBI:29035"/>
    </cofactor>
    <text evidence="1">Binds 2 magnesium or manganese ions per subunit.</text>
</comment>
<comment type="pathway">
    <text evidence="2">Cell wall biogenesis; peptidoglycan biosynthesis.</text>
</comment>
<comment type="subcellular location">
    <subcellularLocation>
        <location evidence="2">Cytoplasm</location>
    </subcellularLocation>
</comment>
<comment type="similarity">
    <text evidence="2">Belongs to the D-alanine--D-alanine ligase family.</text>
</comment>
<feature type="chain" id="PRO_1000117446" description="D-alanine--D-alanine ligase">
    <location>
        <begin position="1"/>
        <end position="382"/>
    </location>
</feature>
<feature type="domain" description="ATP-grasp" evidence="2">
    <location>
        <begin position="161"/>
        <end position="372"/>
    </location>
</feature>
<feature type="binding site" evidence="2">
    <location>
        <begin position="193"/>
        <end position="248"/>
    </location>
    <ligand>
        <name>ATP</name>
        <dbReference type="ChEBI" id="CHEBI:30616"/>
    </ligand>
</feature>
<feature type="binding site" evidence="2">
    <location>
        <position position="326"/>
    </location>
    <ligand>
        <name>Mg(2+)</name>
        <dbReference type="ChEBI" id="CHEBI:18420"/>
        <label>1</label>
    </ligand>
</feature>
<feature type="binding site" evidence="2">
    <location>
        <position position="339"/>
    </location>
    <ligand>
        <name>Mg(2+)</name>
        <dbReference type="ChEBI" id="CHEBI:18420"/>
        <label>1</label>
    </ligand>
</feature>
<feature type="binding site" evidence="2">
    <location>
        <position position="339"/>
    </location>
    <ligand>
        <name>Mg(2+)</name>
        <dbReference type="ChEBI" id="CHEBI:18420"/>
        <label>2</label>
    </ligand>
</feature>
<feature type="binding site" evidence="2">
    <location>
        <position position="341"/>
    </location>
    <ligand>
        <name>Mg(2+)</name>
        <dbReference type="ChEBI" id="CHEBI:18420"/>
        <label>2</label>
    </ligand>
</feature>
<organism>
    <name type="scientific">Pseudarthrobacter chlorophenolicus (strain ATCC 700700 / DSM 12829 / CIP 107037 / JCM 12360 / KCTC 9906 / NCIMB 13794 / A6)</name>
    <name type="common">Arthrobacter chlorophenolicus</name>
    <dbReference type="NCBI Taxonomy" id="452863"/>
    <lineage>
        <taxon>Bacteria</taxon>
        <taxon>Bacillati</taxon>
        <taxon>Actinomycetota</taxon>
        <taxon>Actinomycetes</taxon>
        <taxon>Micrococcales</taxon>
        <taxon>Micrococcaceae</taxon>
        <taxon>Pseudarthrobacter</taxon>
    </lineage>
</organism>
<keyword id="KW-0067">ATP-binding</keyword>
<keyword id="KW-0133">Cell shape</keyword>
<keyword id="KW-0961">Cell wall biogenesis/degradation</keyword>
<keyword id="KW-0963">Cytoplasm</keyword>
<keyword id="KW-0436">Ligase</keyword>
<keyword id="KW-0460">Magnesium</keyword>
<keyword id="KW-0464">Manganese</keyword>
<keyword id="KW-0479">Metal-binding</keyword>
<keyword id="KW-0547">Nucleotide-binding</keyword>
<keyword id="KW-0573">Peptidoglycan synthesis</keyword>
<protein>
    <recommendedName>
        <fullName evidence="2">D-alanine--D-alanine ligase</fullName>
        <ecNumber evidence="2">6.3.2.4</ecNumber>
    </recommendedName>
    <alternativeName>
        <fullName evidence="2">D-Ala-D-Ala ligase</fullName>
    </alternativeName>
    <alternativeName>
        <fullName evidence="2">D-alanylalanine synthetase</fullName>
    </alternativeName>
</protein>
<proteinExistence type="inferred from homology"/>
<dbReference type="EC" id="6.3.2.4" evidence="2"/>
<dbReference type="EMBL" id="CP001341">
    <property type="protein sequence ID" value="ACL40216.1"/>
    <property type="molecule type" value="Genomic_DNA"/>
</dbReference>
<dbReference type="RefSeq" id="WP_015937431.1">
    <property type="nucleotide sequence ID" value="NC_011886.1"/>
</dbReference>
<dbReference type="SMR" id="B8HAC4"/>
<dbReference type="STRING" id="452863.Achl_2251"/>
<dbReference type="KEGG" id="ach:Achl_2251"/>
<dbReference type="eggNOG" id="COG1181">
    <property type="taxonomic scope" value="Bacteria"/>
</dbReference>
<dbReference type="HOGENOM" id="CLU_039268_0_0_11"/>
<dbReference type="OrthoDB" id="9813261at2"/>
<dbReference type="UniPathway" id="UPA00219"/>
<dbReference type="Proteomes" id="UP000002505">
    <property type="component" value="Chromosome"/>
</dbReference>
<dbReference type="GO" id="GO:0005829">
    <property type="term" value="C:cytosol"/>
    <property type="evidence" value="ECO:0007669"/>
    <property type="project" value="TreeGrafter"/>
</dbReference>
<dbReference type="GO" id="GO:0005524">
    <property type="term" value="F:ATP binding"/>
    <property type="evidence" value="ECO:0007669"/>
    <property type="project" value="UniProtKB-KW"/>
</dbReference>
<dbReference type="GO" id="GO:0008716">
    <property type="term" value="F:D-alanine-D-alanine ligase activity"/>
    <property type="evidence" value="ECO:0007669"/>
    <property type="project" value="UniProtKB-UniRule"/>
</dbReference>
<dbReference type="GO" id="GO:0046872">
    <property type="term" value="F:metal ion binding"/>
    <property type="evidence" value="ECO:0007669"/>
    <property type="project" value="UniProtKB-KW"/>
</dbReference>
<dbReference type="GO" id="GO:0071555">
    <property type="term" value="P:cell wall organization"/>
    <property type="evidence" value="ECO:0007669"/>
    <property type="project" value="UniProtKB-KW"/>
</dbReference>
<dbReference type="GO" id="GO:0009252">
    <property type="term" value="P:peptidoglycan biosynthetic process"/>
    <property type="evidence" value="ECO:0007669"/>
    <property type="project" value="UniProtKB-UniRule"/>
</dbReference>
<dbReference type="GO" id="GO:0008360">
    <property type="term" value="P:regulation of cell shape"/>
    <property type="evidence" value="ECO:0007669"/>
    <property type="project" value="UniProtKB-KW"/>
</dbReference>
<dbReference type="FunFam" id="3.30.1490.20:FF:000007">
    <property type="entry name" value="D-alanine--D-alanine ligase"/>
    <property type="match status" value="1"/>
</dbReference>
<dbReference type="FunFam" id="3.30.470.20:FF:000008">
    <property type="entry name" value="D-alanine--D-alanine ligase"/>
    <property type="match status" value="1"/>
</dbReference>
<dbReference type="Gene3D" id="3.40.50.20">
    <property type="match status" value="1"/>
</dbReference>
<dbReference type="Gene3D" id="3.30.1490.20">
    <property type="entry name" value="ATP-grasp fold, A domain"/>
    <property type="match status" value="1"/>
</dbReference>
<dbReference type="Gene3D" id="3.30.470.20">
    <property type="entry name" value="ATP-grasp fold, B domain"/>
    <property type="match status" value="1"/>
</dbReference>
<dbReference type="HAMAP" id="MF_00047">
    <property type="entry name" value="Dala_Dala_lig"/>
    <property type="match status" value="1"/>
</dbReference>
<dbReference type="InterPro" id="IPR011761">
    <property type="entry name" value="ATP-grasp"/>
</dbReference>
<dbReference type="InterPro" id="IPR013815">
    <property type="entry name" value="ATP_grasp_subdomain_1"/>
</dbReference>
<dbReference type="InterPro" id="IPR000291">
    <property type="entry name" value="D-Ala_lig_Van_CS"/>
</dbReference>
<dbReference type="InterPro" id="IPR005905">
    <property type="entry name" value="D_ala_D_ala"/>
</dbReference>
<dbReference type="InterPro" id="IPR011095">
    <property type="entry name" value="Dala_Dala_lig_C"/>
</dbReference>
<dbReference type="InterPro" id="IPR011127">
    <property type="entry name" value="Dala_Dala_lig_N"/>
</dbReference>
<dbReference type="InterPro" id="IPR016185">
    <property type="entry name" value="PreATP-grasp_dom_sf"/>
</dbReference>
<dbReference type="NCBIfam" id="TIGR01205">
    <property type="entry name" value="D_ala_D_alaTIGR"/>
    <property type="match status" value="1"/>
</dbReference>
<dbReference type="NCBIfam" id="NF002528">
    <property type="entry name" value="PRK01966.1-4"/>
    <property type="match status" value="1"/>
</dbReference>
<dbReference type="PANTHER" id="PTHR23132">
    <property type="entry name" value="D-ALANINE--D-ALANINE LIGASE"/>
    <property type="match status" value="1"/>
</dbReference>
<dbReference type="PANTHER" id="PTHR23132:SF25">
    <property type="entry name" value="D-ALANINE--D-ALANINE LIGASE A"/>
    <property type="match status" value="1"/>
</dbReference>
<dbReference type="Pfam" id="PF07478">
    <property type="entry name" value="Dala_Dala_lig_C"/>
    <property type="match status" value="1"/>
</dbReference>
<dbReference type="Pfam" id="PF01820">
    <property type="entry name" value="Dala_Dala_lig_N"/>
    <property type="match status" value="1"/>
</dbReference>
<dbReference type="PIRSF" id="PIRSF039102">
    <property type="entry name" value="Ddl/VanB"/>
    <property type="match status" value="1"/>
</dbReference>
<dbReference type="SUPFAM" id="SSF56059">
    <property type="entry name" value="Glutathione synthetase ATP-binding domain-like"/>
    <property type="match status" value="1"/>
</dbReference>
<dbReference type="SUPFAM" id="SSF52440">
    <property type="entry name" value="PreATP-grasp domain"/>
    <property type="match status" value="1"/>
</dbReference>
<dbReference type="PROSITE" id="PS50975">
    <property type="entry name" value="ATP_GRASP"/>
    <property type="match status" value="1"/>
</dbReference>
<dbReference type="PROSITE" id="PS00843">
    <property type="entry name" value="DALA_DALA_LIGASE_1"/>
    <property type="match status" value="1"/>
</dbReference>
<dbReference type="PROSITE" id="PS00844">
    <property type="entry name" value="DALA_DALA_LIGASE_2"/>
    <property type="match status" value="1"/>
</dbReference>
<sequence>MSHKDLTSGEPAGRPKPRVAVLFGGRSSEHAVSCVTAAGVLGAINKDKYDVIPIGIAKSGQWVLAGGDTAQWSLAGKALPEVAPSEQTVTLAEIGGEHQLIVAAPNEVPQELGTVDVVFPLLHGPFGEDGTIQGLLELSDTRYVGAGVLASAVGMDKHFMKVVFESAGLHVGPYVAVTDRQWQKDPEAVRKQVDRLGFPVFVKPARAGSSMGISKVDSLEGLDAAIEEARRHDLKLVIEAGIVGREIECAVLEGRGTDAPRTSLPGEISVAGGGHEFYDFNAKYVEDDAASLSCPADIPDEAIARVRELAAAAFDAVGAEGLSRVDFFYTPDGDLIINEINTMPGFTPKSMYPQMWAKSGLGYAELIDELIHLALNRKTGLR</sequence>
<reference key="1">
    <citation type="submission" date="2009-01" db="EMBL/GenBank/DDBJ databases">
        <title>Complete sequence of chromosome of Arthrobacter chlorophenolicus A6.</title>
        <authorList>
            <consortium name="US DOE Joint Genome Institute"/>
            <person name="Lucas S."/>
            <person name="Copeland A."/>
            <person name="Lapidus A."/>
            <person name="Glavina del Rio T."/>
            <person name="Tice H."/>
            <person name="Bruce D."/>
            <person name="Goodwin L."/>
            <person name="Pitluck S."/>
            <person name="Goltsman E."/>
            <person name="Clum A."/>
            <person name="Larimer F."/>
            <person name="Land M."/>
            <person name="Hauser L."/>
            <person name="Kyrpides N."/>
            <person name="Mikhailova N."/>
            <person name="Jansson J."/>
            <person name="Richardson P."/>
        </authorList>
    </citation>
    <scope>NUCLEOTIDE SEQUENCE [LARGE SCALE GENOMIC DNA]</scope>
    <source>
        <strain>ATCC 700700 / DSM 12829 / CIP 107037 / JCM 12360 / KCTC 9906 / NCIMB 13794 / A6</strain>
    </source>
</reference>
<gene>
    <name evidence="2" type="primary">ddl</name>
    <name type="ordered locus">Achl_2251</name>
</gene>
<evidence type="ECO:0000250" key="1"/>
<evidence type="ECO:0000255" key="2">
    <source>
        <dbReference type="HAMAP-Rule" id="MF_00047"/>
    </source>
</evidence>
<name>DDL_PSECP</name>